<organism>
    <name type="scientific">Solanum lycopersicum</name>
    <name type="common">Tomato</name>
    <name type="synonym">Lycopersicon esculentum</name>
    <dbReference type="NCBI Taxonomy" id="4081"/>
    <lineage>
        <taxon>Eukaryota</taxon>
        <taxon>Viridiplantae</taxon>
        <taxon>Streptophyta</taxon>
        <taxon>Embryophyta</taxon>
        <taxon>Tracheophyta</taxon>
        <taxon>Spermatophyta</taxon>
        <taxon>Magnoliopsida</taxon>
        <taxon>eudicotyledons</taxon>
        <taxon>Gunneridae</taxon>
        <taxon>Pentapetalae</taxon>
        <taxon>asterids</taxon>
        <taxon>lamiids</taxon>
        <taxon>Solanales</taxon>
        <taxon>Solanaceae</taxon>
        <taxon>Solanoideae</taxon>
        <taxon>Solaneae</taxon>
        <taxon>Solanum</taxon>
        <taxon>Solanum subgen. Lycopersicon</taxon>
    </lineage>
</organism>
<dbReference type="EMBL" id="X60758">
    <property type="protein sequence ID" value="CAA43170.1"/>
    <property type="molecule type" value="mRNA"/>
</dbReference>
<dbReference type="EMBL" id="X60480">
    <property type="protein sequence ID" value="CAA43010.1"/>
    <property type="molecule type" value="mRNA"/>
</dbReference>
<dbReference type="PIR" id="S23728">
    <property type="entry name" value="S23728"/>
</dbReference>
<dbReference type="SMR" id="Q42464"/>
<dbReference type="STRING" id="4081.Q42464"/>
<dbReference type="PaxDb" id="4081-Solyc05g015750.2.1"/>
<dbReference type="eggNOG" id="KOG0014">
    <property type="taxonomic scope" value="Eukaryota"/>
</dbReference>
<dbReference type="InParanoid" id="Q42464"/>
<dbReference type="Proteomes" id="UP000004994">
    <property type="component" value="Unplaced"/>
</dbReference>
<dbReference type="ExpressionAtlas" id="Q42464">
    <property type="expression patterns" value="baseline"/>
</dbReference>
<dbReference type="GO" id="GO:0005634">
    <property type="term" value="C:nucleus"/>
    <property type="evidence" value="ECO:0007669"/>
    <property type="project" value="UniProtKB-SubCell"/>
</dbReference>
<dbReference type="GO" id="GO:0000981">
    <property type="term" value="F:DNA-binding transcription factor activity, RNA polymerase II-specific"/>
    <property type="evidence" value="ECO:0000318"/>
    <property type="project" value="GO_Central"/>
</dbReference>
<dbReference type="GO" id="GO:0046983">
    <property type="term" value="F:protein dimerization activity"/>
    <property type="evidence" value="ECO:0007669"/>
    <property type="project" value="InterPro"/>
</dbReference>
<dbReference type="GO" id="GO:0000978">
    <property type="term" value="F:RNA polymerase II cis-regulatory region sequence-specific DNA binding"/>
    <property type="evidence" value="ECO:0000318"/>
    <property type="project" value="GO_Central"/>
</dbReference>
<dbReference type="GO" id="GO:0045944">
    <property type="term" value="P:positive regulation of transcription by RNA polymerase II"/>
    <property type="evidence" value="ECO:0007669"/>
    <property type="project" value="InterPro"/>
</dbReference>
<dbReference type="GO" id="GO:0006357">
    <property type="term" value="P:regulation of transcription by RNA polymerase II"/>
    <property type="evidence" value="ECO:0000318"/>
    <property type="project" value="GO_Central"/>
</dbReference>
<dbReference type="CDD" id="cd00265">
    <property type="entry name" value="MADS_MEF2_like"/>
    <property type="match status" value="1"/>
</dbReference>
<dbReference type="FunFam" id="3.40.1810.10:FF:000011">
    <property type="entry name" value="MADS-box transcription factor 7"/>
    <property type="match status" value="1"/>
</dbReference>
<dbReference type="Gene3D" id="3.40.1810.10">
    <property type="entry name" value="Transcription factor, MADS-box"/>
    <property type="match status" value="1"/>
</dbReference>
<dbReference type="InterPro" id="IPR050142">
    <property type="entry name" value="MADS-box/MEF2_TF"/>
</dbReference>
<dbReference type="InterPro" id="IPR033896">
    <property type="entry name" value="MEF2-like_N"/>
</dbReference>
<dbReference type="InterPro" id="IPR002487">
    <property type="entry name" value="TF_Kbox"/>
</dbReference>
<dbReference type="InterPro" id="IPR002100">
    <property type="entry name" value="TF_MADSbox"/>
</dbReference>
<dbReference type="InterPro" id="IPR036879">
    <property type="entry name" value="TF_MADSbox_sf"/>
</dbReference>
<dbReference type="PANTHER" id="PTHR48019">
    <property type="entry name" value="SERUM RESPONSE FACTOR HOMOLOG"/>
    <property type="match status" value="1"/>
</dbReference>
<dbReference type="Pfam" id="PF01486">
    <property type="entry name" value="K-box"/>
    <property type="match status" value="1"/>
</dbReference>
<dbReference type="Pfam" id="PF00319">
    <property type="entry name" value="SRF-TF"/>
    <property type="match status" value="1"/>
</dbReference>
<dbReference type="PRINTS" id="PR00404">
    <property type="entry name" value="MADSDOMAIN"/>
</dbReference>
<dbReference type="SMART" id="SM00432">
    <property type="entry name" value="MADS"/>
    <property type="match status" value="1"/>
</dbReference>
<dbReference type="SUPFAM" id="SSF55455">
    <property type="entry name" value="SRF-like"/>
    <property type="match status" value="1"/>
</dbReference>
<dbReference type="PROSITE" id="PS51297">
    <property type="entry name" value="K_BOX"/>
    <property type="match status" value="1"/>
</dbReference>
<dbReference type="PROSITE" id="PS00350">
    <property type="entry name" value="MADS_BOX_1"/>
    <property type="match status" value="1"/>
</dbReference>
<dbReference type="PROSITE" id="PS50066">
    <property type="entry name" value="MADS_BOX_2"/>
    <property type="match status" value="1"/>
</dbReference>
<accession>Q42464</accession>
<keyword id="KW-0238">DNA-binding</keyword>
<keyword id="KW-0539">Nucleus</keyword>
<keyword id="KW-1185">Reference proteome</keyword>
<keyword id="KW-0804">Transcription</keyword>
<keyword id="KW-0805">Transcription regulation</keyword>
<gene>
    <name type="primary">TDR5</name>
</gene>
<feature type="chain" id="PRO_0000199468" description="Agamous-like MADS-box protein AGL9 homolog">
    <location>
        <begin position="1"/>
        <end position="224"/>
    </location>
</feature>
<feature type="domain" description="MADS-box" evidence="2">
    <location>
        <begin position="3"/>
        <end position="57"/>
    </location>
</feature>
<feature type="domain" description="K-box" evidence="3">
    <location>
        <begin position="89"/>
        <end position="179"/>
    </location>
</feature>
<sequence>MGRGRVELKRIEGKINRQVTFAKRRNGLLKKAYELSVLCDAEVALIIFSNRGKLYEFCSSSSMLKTLERYQKCNYGAPEPNISTREALEISSQQEYLKLKGRYEALQRSQRNLLGEDLGPLNSKELESLERQLDMSLKQIRSTRTQLMLDQLTDYQRKEHALNEANRTLKQRLMEGSQLNLQCSQMHKLWAMAGKQLKLRAMASFILWIVNLLCKLGIRMIQLQ</sequence>
<proteinExistence type="evidence at transcript level"/>
<comment type="function">
    <text evidence="1">Probable transcription factor active in inflorescence development and floral organogenesis.</text>
</comment>
<comment type="subcellular location">
    <subcellularLocation>
        <location evidence="2">Nucleus</location>
    </subcellularLocation>
</comment>
<comment type="tissue specificity">
    <text>Flower specific.</text>
</comment>
<evidence type="ECO:0000250" key="1"/>
<evidence type="ECO:0000255" key="2">
    <source>
        <dbReference type="PROSITE-ProRule" id="PRU00251"/>
    </source>
</evidence>
<evidence type="ECO:0000255" key="3">
    <source>
        <dbReference type="PROSITE-ProRule" id="PRU00629"/>
    </source>
</evidence>
<protein>
    <recommendedName>
        <fullName>Agamous-like MADS-box protein AGL9 homolog</fullName>
    </recommendedName>
    <alternativeName>
        <fullName>TM5</fullName>
    </alternativeName>
</protein>
<reference key="1">
    <citation type="journal article" date="1991" name="Plant J.">
        <title>The MADS box gene family in tomato: temporal expression during floral development, conserved secondary structures and homology with homeotic genes from Antirrhinum and Arabidopsis.</title>
        <authorList>
            <person name="Pnueli L."/>
            <person name="Abu-Abeid M."/>
            <person name="Zamir D."/>
            <person name="Nacken W."/>
            <person name="Schwarz-Sommer Z."/>
            <person name="Lifschitz E."/>
        </authorList>
    </citation>
    <scope>NUCLEOTIDE SEQUENCE [MRNA]</scope>
    <source>
        <strain>cv. VFNT Cherry</strain>
        <tissue>Flower</tissue>
    </source>
</reference>
<name>AGL9_SOLLC</name>